<evidence type="ECO:0000255" key="1">
    <source>
        <dbReference type="HAMAP-Rule" id="MF_01820"/>
    </source>
</evidence>
<evidence type="ECO:0000255" key="2">
    <source>
        <dbReference type="PROSITE-ProRule" id="PRU01058"/>
    </source>
</evidence>
<gene>
    <name evidence="1" type="primary">rsgA</name>
    <name type="ordered locus">Sca_0841</name>
</gene>
<reference key="1">
    <citation type="journal article" date="2009" name="Appl. Environ. Microbiol.">
        <title>Genome analysis of the meat starter culture bacterium Staphylococcus carnosus TM300.</title>
        <authorList>
            <person name="Rosenstein R."/>
            <person name="Nerz C."/>
            <person name="Biswas L."/>
            <person name="Resch A."/>
            <person name="Raddatz G."/>
            <person name="Schuster S.C."/>
            <person name="Goetz F."/>
        </authorList>
    </citation>
    <scope>NUCLEOTIDE SEQUENCE [LARGE SCALE GENOMIC DNA]</scope>
    <source>
        <strain>TM300</strain>
    </source>
</reference>
<proteinExistence type="inferred from homology"/>
<keyword id="KW-0963">Cytoplasm</keyword>
<keyword id="KW-0342">GTP-binding</keyword>
<keyword id="KW-0378">Hydrolase</keyword>
<keyword id="KW-0479">Metal-binding</keyword>
<keyword id="KW-0547">Nucleotide-binding</keyword>
<keyword id="KW-1185">Reference proteome</keyword>
<keyword id="KW-0690">Ribosome biogenesis</keyword>
<keyword id="KW-0694">RNA-binding</keyword>
<keyword id="KW-0699">rRNA-binding</keyword>
<keyword id="KW-0862">Zinc</keyword>
<name>RSGA_STACT</name>
<dbReference type="EC" id="3.6.1.-" evidence="1"/>
<dbReference type="EMBL" id="AM295250">
    <property type="protein sequence ID" value="CAL27751.1"/>
    <property type="molecule type" value="Genomic_DNA"/>
</dbReference>
<dbReference type="RefSeq" id="WP_015900093.1">
    <property type="nucleotide sequence ID" value="NC_012121.1"/>
</dbReference>
<dbReference type="SMR" id="B9DPK4"/>
<dbReference type="GeneID" id="93793274"/>
<dbReference type="KEGG" id="sca:SCA_0841"/>
<dbReference type="eggNOG" id="COG1162">
    <property type="taxonomic scope" value="Bacteria"/>
</dbReference>
<dbReference type="HOGENOM" id="CLU_033617_2_1_9"/>
<dbReference type="OrthoDB" id="9809485at2"/>
<dbReference type="BioCyc" id="SCAR396513:SCA_RS04255-MONOMER"/>
<dbReference type="Proteomes" id="UP000000444">
    <property type="component" value="Chromosome"/>
</dbReference>
<dbReference type="GO" id="GO:0005737">
    <property type="term" value="C:cytoplasm"/>
    <property type="evidence" value="ECO:0007669"/>
    <property type="project" value="UniProtKB-SubCell"/>
</dbReference>
<dbReference type="GO" id="GO:0005525">
    <property type="term" value="F:GTP binding"/>
    <property type="evidence" value="ECO:0007669"/>
    <property type="project" value="UniProtKB-UniRule"/>
</dbReference>
<dbReference type="GO" id="GO:0003924">
    <property type="term" value="F:GTPase activity"/>
    <property type="evidence" value="ECO:0007669"/>
    <property type="project" value="UniProtKB-UniRule"/>
</dbReference>
<dbReference type="GO" id="GO:0046872">
    <property type="term" value="F:metal ion binding"/>
    <property type="evidence" value="ECO:0007669"/>
    <property type="project" value="UniProtKB-KW"/>
</dbReference>
<dbReference type="GO" id="GO:0019843">
    <property type="term" value="F:rRNA binding"/>
    <property type="evidence" value="ECO:0007669"/>
    <property type="project" value="UniProtKB-KW"/>
</dbReference>
<dbReference type="GO" id="GO:0042274">
    <property type="term" value="P:ribosomal small subunit biogenesis"/>
    <property type="evidence" value="ECO:0007669"/>
    <property type="project" value="UniProtKB-UniRule"/>
</dbReference>
<dbReference type="CDD" id="cd04466">
    <property type="entry name" value="S1_YloQ_GTPase"/>
    <property type="match status" value="1"/>
</dbReference>
<dbReference type="CDD" id="cd01854">
    <property type="entry name" value="YjeQ_EngC"/>
    <property type="match status" value="1"/>
</dbReference>
<dbReference type="Gene3D" id="2.40.50.140">
    <property type="entry name" value="Nucleic acid-binding proteins"/>
    <property type="match status" value="1"/>
</dbReference>
<dbReference type="Gene3D" id="3.40.50.300">
    <property type="entry name" value="P-loop containing nucleotide triphosphate hydrolases"/>
    <property type="match status" value="1"/>
</dbReference>
<dbReference type="Gene3D" id="1.10.40.50">
    <property type="entry name" value="Probable gtpase engc, domain 3"/>
    <property type="match status" value="1"/>
</dbReference>
<dbReference type="HAMAP" id="MF_01820">
    <property type="entry name" value="GTPase_RsgA"/>
    <property type="match status" value="1"/>
</dbReference>
<dbReference type="InterPro" id="IPR030378">
    <property type="entry name" value="G_CP_dom"/>
</dbReference>
<dbReference type="InterPro" id="IPR012340">
    <property type="entry name" value="NA-bd_OB-fold"/>
</dbReference>
<dbReference type="InterPro" id="IPR027417">
    <property type="entry name" value="P-loop_NTPase"/>
</dbReference>
<dbReference type="InterPro" id="IPR004881">
    <property type="entry name" value="Ribosome_biogen_GTPase_RsgA"/>
</dbReference>
<dbReference type="InterPro" id="IPR010914">
    <property type="entry name" value="RsgA_GTPase_dom"/>
</dbReference>
<dbReference type="InterPro" id="IPR031944">
    <property type="entry name" value="RsgA_N"/>
</dbReference>
<dbReference type="NCBIfam" id="TIGR00157">
    <property type="entry name" value="ribosome small subunit-dependent GTPase A"/>
    <property type="match status" value="1"/>
</dbReference>
<dbReference type="PANTHER" id="PTHR32120">
    <property type="entry name" value="SMALL RIBOSOMAL SUBUNIT BIOGENESIS GTPASE RSGA"/>
    <property type="match status" value="1"/>
</dbReference>
<dbReference type="PANTHER" id="PTHR32120:SF11">
    <property type="entry name" value="SMALL RIBOSOMAL SUBUNIT BIOGENESIS GTPASE RSGA 1, MITOCHONDRIAL-RELATED"/>
    <property type="match status" value="1"/>
</dbReference>
<dbReference type="Pfam" id="PF03193">
    <property type="entry name" value="RsgA_GTPase"/>
    <property type="match status" value="1"/>
</dbReference>
<dbReference type="Pfam" id="PF16745">
    <property type="entry name" value="RsgA_N"/>
    <property type="match status" value="1"/>
</dbReference>
<dbReference type="SUPFAM" id="SSF50249">
    <property type="entry name" value="Nucleic acid-binding proteins"/>
    <property type="match status" value="1"/>
</dbReference>
<dbReference type="SUPFAM" id="SSF52540">
    <property type="entry name" value="P-loop containing nucleoside triphosphate hydrolases"/>
    <property type="match status" value="1"/>
</dbReference>
<dbReference type="PROSITE" id="PS50936">
    <property type="entry name" value="ENGC_GTPASE"/>
    <property type="match status" value="1"/>
</dbReference>
<dbReference type="PROSITE" id="PS51721">
    <property type="entry name" value="G_CP"/>
    <property type="match status" value="1"/>
</dbReference>
<sequence>MRTGRIIKSLSGVYRVDSDGEMFDTKPRGLFRKKKFSPIVGDIVDFEIENVTEGYIQHVHERQNELKRPPVSNIDHLVIVMSAVEPDFSTQLVDRFLVIAHSYGLNPRIVVTKKDMASDSQIERIEKDLDVYRAIGYPVQFVGKNDNIETIFDEWGSGLAVLSGQSGVGKSTLLNAYRPDLAIETNQISKSLNRGKHTTRHVELFERKGGFVADTPGFSALDFDHIHKDEVKDYFLEIQEYGQGCKFRNCNHIKEPQCNVKAQVEAGNIAQFRYDHYVQLFEEIANRKERY</sequence>
<protein>
    <recommendedName>
        <fullName evidence="1">Small ribosomal subunit biogenesis GTPase RsgA</fullName>
        <ecNumber evidence="1">3.6.1.-</ecNumber>
    </recommendedName>
</protein>
<comment type="function">
    <text evidence="1">One of several proteins that assist in the late maturation steps of the functional core of the 30S ribosomal subunit. Helps release RbfA from mature subunits. May play a role in the assembly of ribosomal proteins into the subunit. Circularly permuted GTPase that catalyzes slow GTP hydrolysis, GTPase activity is stimulated by the 30S ribosomal subunit.</text>
</comment>
<comment type="cofactor">
    <cofactor evidence="1">
        <name>Zn(2+)</name>
        <dbReference type="ChEBI" id="CHEBI:29105"/>
    </cofactor>
    <text evidence="1">Binds 1 zinc ion per subunit.</text>
</comment>
<comment type="subunit">
    <text evidence="1">Monomer. Associates with 30S ribosomal subunit, binds 16S rRNA.</text>
</comment>
<comment type="subcellular location">
    <subcellularLocation>
        <location evidence="1">Cytoplasm</location>
    </subcellularLocation>
</comment>
<comment type="similarity">
    <text evidence="1">Belongs to the TRAFAC class YlqF/YawG GTPase family. RsgA subfamily.</text>
</comment>
<accession>B9DPK4</accession>
<organism>
    <name type="scientific">Staphylococcus carnosus (strain TM300)</name>
    <dbReference type="NCBI Taxonomy" id="396513"/>
    <lineage>
        <taxon>Bacteria</taxon>
        <taxon>Bacillati</taxon>
        <taxon>Bacillota</taxon>
        <taxon>Bacilli</taxon>
        <taxon>Bacillales</taxon>
        <taxon>Staphylococcaceae</taxon>
        <taxon>Staphylococcus</taxon>
    </lineage>
</organism>
<feature type="chain" id="PRO_1000188142" description="Small ribosomal subunit biogenesis GTPase RsgA">
    <location>
        <begin position="1"/>
        <end position="291"/>
    </location>
</feature>
<feature type="domain" description="CP-type G" evidence="2">
    <location>
        <begin position="63"/>
        <end position="221"/>
    </location>
</feature>
<feature type="binding site" evidence="1">
    <location>
        <begin position="112"/>
        <end position="115"/>
    </location>
    <ligand>
        <name>GTP</name>
        <dbReference type="ChEBI" id="CHEBI:37565"/>
    </ligand>
</feature>
<feature type="binding site" evidence="1">
    <location>
        <begin position="164"/>
        <end position="172"/>
    </location>
    <ligand>
        <name>GTP</name>
        <dbReference type="ChEBI" id="CHEBI:37565"/>
    </ligand>
</feature>
<feature type="binding site" evidence="1">
    <location>
        <position position="245"/>
    </location>
    <ligand>
        <name>Zn(2+)</name>
        <dbReference type="ChEBI" id="CHEBI:29105"/>
    </ligand>
</feature>
<feature type="binding site" evidence="1">
    <location>
        <position position="250"/>
    </location>
    <ligand>
        <name>Zn(2+)</name>
        <dbReference type="ChEBI" id="CHEBI:29105"/>
    </ligand>
</feature>
<feature type="binding site" evidence="1">
    <location>
        <position position="252"/>
    </location>
    <ligand>
        <name>Zn(2+)</name>
        <dbReference type="ChEBI" id="CHEBI:29105"/>
    </ligand>
</feature>
<feature type="binding site" evidence="1">
    <location>
        <position position="258"/>
    </location>
    <ligand>
        <name>Zn(2+)</name>
        <dbReference type="ChEBI" id="CHEBI:29105"/>
    </ligand>
</feature>